<keyword id="KW-0068">Autocatalytic cleavage</keyword>
<keyword id="KW-0210">Decarboxylase</keyword>
<keyword id="KW-0456">Lyase</keyword>
<keyword id="KW-0620">Polyamine biosynthesis</keyword>
<keyword id="KW-0670">Pyruvate</keyword>
<keyword id="KW-1185">Reference proteome</keyword>
<keyword id="KW-0949">S-adenosyl-L-methionine</keyword>
<keyword id="KW-0704">Schiff base</keyword>
<keyword id="KW-0745">Spermidine biosynthesis</keyword>
<keyword id="KW-0865">Zymogen</keyword>
<protein>
    <recommendedName>
        <fullName evidence="1">S-adenosylmethionine decarboxylase proenzyme</fullName>
        <shortName evidence="1">AdoMetDC</shortName>
        <shortName evidence="1">SAMDC</shortName>
        <ecNumber evidence="1">4.1.1.50</ecNumber>
    </recommendedName>
    <component>
        <recommendedName>
            <fullName evidence="1">S-adenosylmethionine decarboxylase beta chain</fullName>
        </recommendedName>
    </component>
    <component>
        <recommendedName>
            <fullName evidence="1">S-adenosylmethionine decarboxylase alpha chain</fullName>
        </recommendedName>
    </component>
</protein>
<evidence type="ECO:0000255" key="1">
    <source>
        <dbReference type="HAMAP-Rule" id="MF_00465"/>
    </source>
</evidence>
<dbReference type="EC" id="4.1.1.50" evidence="1"/>
<dbReference type="EMBL" id="AE009442">
    <property type="protein sequence ID" value="AAO28623.1"/>
    <property type="molecule type" value="Genomic_DNA"/>
</dbReference>
<dbReference type="RefSeq" id="WP_004087867.1">
    <property type="nucleotide sequence ID" value="NC_004556.1"/>
</dbReference>
<dbReference type="SMR" id="Q87DD1"/>
<dbReference type="GeneID" id="93904533"/>
<dbReference type="KEGG" id="xft:PD_0754"/>
<dbReference type="HOGENOM" id="CLU_092007_0_0_6"/>
<dbReference type="UniPathway" id="UPA00331">
    <property type="reaction ID" value="UER00451"/>
</dbReference>
<dbReference type="Proteomes" id="UP000002516">
    <property type="component" value="Chromosome"/>
</dbReference>
<dbReference type="GO" id="GO:0005829">
    <property type="term" value="C:cytosol"/>
    <property type="evidence" value="ECO:0007669"/>
    <property type="project" value="TreeGrafter"/>
</dbReference>
<dbReference type="GO" id="GO:0004014">
    <property type="term" value="F:adenosylmethionine decarboxylase activity"/>
    <property type="evidence" value="ECO:0007669"/>
    <property type="project" value="UniProtKB-UniRule"/>
</dbReference>
<dbReference type="GO" id="GO:0008295">
    <property type="term" value="P:spermidine biosynthetic process"/>
    <property type="evidence" value="ECO:0007669"/>
    <property type="project" value="UniProtKB-UniRule"/>
</dbReference>
<dbReference type="FunFam" id="3.60.90.10:FF:000001">
    <property type="entry name" value="S-adenosylmethionine decarboxylase proenzyme"/>
    <property type="match status" value="1"/>
</dbReference>
<dbReference type="Gene3D" id="3.60.90.10">
    <property type="entry name" value="S-adenosylmethionine decarboxylase"/>
    <property type="match status" value="1"/>
</dbReference>
<dbReference type="HAMAP" id="MF_00465">
    <property type="entry name" value="AdoMetDC_2"/>
    <property type="match status" value="1"/>
</dbReference>
<dbReference type="InterPro" id="IPR003826">
    <property type="entry name" value="AdoMetDC_fam_prok"/>
</dbReference>
<dbReference type="InterPro" id="IPR009165">
    <property type="entry name" value="S-AdoMet_deCO2ase_bac"/>
</dbReference>
<dbReference type="InterPro" id="IPR016067">
    <property type="entry name" value="S-AdoMet_deCO2ase_core"/>
</dbReference>
<dbReference type="NCBIfam" id="TIGR03331">
    <property type="entry name" value="SAM_DCase_Eco"/>
    <property type="match status" value="1"/>
</dbReference>
<dbReference type="PANTHER" id="PTHR33866">
    <property type="entry name" value="S-ADENOSYLMETHIONINE DECARBOXYLASE PROENZYME"/>
    <property type="match status" value="1"/>
</dbReference>
<dbReference type="PANTHER" id="PTHR33866:SF1">
    <property type="entry name" value="S-ADENOSYLMETHIONINE DECARBOXYLASE PROENZYME"/>
    <property type="match status" value="1"/>
</dbReference>
<dbReference type="Pfam" id="PF02675">
    <property type="entry name" value="AdoMet_dc"/>
    <property type="match status" value="1"/>
</dbReference>
<dbReference type="PIRSF" id="PIRSF001356">
    <property type="entry name" value="SAM_decarboxylas"/>
    <property type="match status" value="1"/>
</dbReference>
<dbReference type="SUPFAM" id="SSF56276">
    <property type="entry name" value="S-adenosylmethionine decarboxylase"/>
    <property type="match status" value="1"/>
</dbReference>
<reference key="1">
    <citation type="journal article" date="2003" name="J. Bacteriol.">
        <title>Comparative analyses of the complete genome sequences of Pierce's disease and citrus variegated chlorosis strains of Xylella fastidiosa.</title>
        <authorList>
            <person name="Van Sluys M.A."/>
            <person name="de Oliveira M.C."/>
            <person name="Monteiro-Vitorello C.B."/>
            <person name="Miyaki C.Y."/>
            <person name="Furlan L.R."/>
            <person name="Camargo L.E.A."/>
            <person name="da Silva A.C.R."/>
            <person name="Moon D.H."/>
            <person name="Takita M.A."/>
            <person name="Lemos E.G.M."/>
            <person name="Machado M.A."/>
            <person name="Ferro M.I.T."/>
            <person name="da Silva F.R."/>
            <person name="Goldman M.H.S."/>
            <person name="Goldman G.H."/>
            <person name="Lemos M.V.F."/>
            <person name="El-Dorry H."/>
            <person name="Tsai S.M."/>
            <person name="Carrer H."/>
            <person name="Carraro D.M."/>
            <person name="de Oliveira R.C."/>
            <person name="Nunes L.R."/>
            <person name="Siqueira W.J."/>
            <person name="Coutinho L.L."/>
            <person name="Kimura E.T."/>
            <person name="Ferro E.S."/>
            <person name="Harakava R."/>
            <person name="Kuramae E.E."/>
            <person name="Marino C.L."/>
            <person name="Giglioti E."/>
            <person name="Abreu I.L."/>
            <person name="Alves L.M.C."/>
            <person name="do Amaral A.M."/>
            <person name="Baia G.S."/>
            <person name="Blanco S.R."/>
            <person name="Brito M.S."/>
            <person name="Cannavan F.S."/>
            <person name="Celestino A.V."/>
            <person name="da Cunha A.F."/>
            <person name="Fenille R.C."/>
            <person name="Ferro J.A."/>
            <person name="Formighieri E.F."/>
            <person name="Kishi L.T."/>
            <person name="Leoni S.G."/>
            <person name="Oliveira A.R."/>
            <person name="Rosa V.E. Jr."/>
            <person name="Sassaki F.T."/>
            <person name="Sena J.A.D."/>
            <person name="de Souza A.A."/>
            <person name="Truffi D."/>
            <person name="Tsukumo F."/>
            <person name="Yanai G.M."/>
            <person name="Zaros L.G."/>
            <person name="Civerolo E.L."/>
            <person name="Simpson A.J.G."/>
            <person name="Almeida N.F. Jr."/>
            <person name="Setubal J.C."/>
            <person name="Kitajima J.P."/>
        </authorList>
    </citation>
    <scope>NUCLEOTIDE SEQUENCE [LARGE SCALE GENOMIC DNA]</scope>
    <source>
        <strain>Temecula1 / ATCC 700964</strain>
    </source>
</reference>
<feature type="chain" id="PRO_0000030073" description="S-adenosylmethionine decarboxylase beta chain" evidence="1">
    <location>
        <begin position="1"/>
        <end position="112"/>
    </location>
</feature>
<feature type="chain" id="PRO_0000030074" description="S-adenosylmethionine decarboxylase alpha chain" evidence="1">
    <location>
        <begin position="113"/>
        <end position="264"/>
    </location>
</feature>
<feature type="active site" description="Schiff-base intermediate with substrate; via pyruvic acid" evidence="1">
    <location>
        <position position="113"/>
    </location>
</feature>
<feature type="active site" description="Proton acceptor; for processing activity" evidence="1">
    <location>
        <position position="118"/>
    </location>
</feature>
<feature type="active site" description="Proton donor; for catalytic activity" evidence="1">
    <location>
        <position position="141"/>
    </location>
</feature>
<feature type="site" description="Cleavage (non-hydrolytic); by autolysis" evidence="1">
    <location>
        <begin position="112"/>
        <end position="113"/>
    </location>
</feature>
<feature type="modified residue" description="Pyruvic acid (Ser); by autocatalysis" evidence="1">
    <location>
        <position position="113"/>
    </location>
</feature>
<organism>
    <name type="scientific">Xylella fastidiosa (strain Temecula1 / ATCC 700964)</name>
    <dbReference type="NCBI Taxonomy" id="183190"/>
    <lineage>
        <taxon>Bacteria</taxon>
        <taxon>Pseudomonadati</taxon>
        <taxon>Pseudomonadota</taxon>
        <taxon>Gammaproteobacteria</taxon>
        <taxon>Lysobacterales</taxon>
        <taxon>Lysobacteraceae</taxon>
        <taxon>Xylella</taxon>
    </lineage>
</organism>
<accession>Q87DD1</accession>
<sequence>MVKPLPRLRLQGFNNLTKALSFNIYDVCYARTEEERQRYIDYIDERYDADRLTQILTDVAEIIGANILNIARQDYDPQGASVTILISEEPVIDKKQAGKELISDAVVTHMDKSHITVHTYPETHPQEGIATFRADIDVATCGVISPLKALNYLIESLESDIVIMDYRVRGFTRDVKGKKHFIDHKINSIQNFLSKSIKSRYEMFDVNVYQENIFHTKMHLKDFDLDQYLFEEKARNLSFKERMKIEALLKLEIEELFHGRNLAE</sequence>
<name>SPED_XYLFT</name>
<gene>
    <name evidence="1" type="primary">speD</name>
    <name type="ordered locus">PD_0754</name>
</gene>
<proteinExistence type="inferred from homology"/>
<comment type="function">
    <text evidence="1">Catalyzes the decarboxylation of S-adenosylmethionine to S-adenosylmethioninamine (dcAdoMet), the propylamine donor required for the synthesis of the polyamines spermine and spermidine from the diamine putrescine.</text>
</comment>
<comment type="catalytic activity">
    <reaction evidence="1">
        <text>S-adenosyl-L-methionine + H(+) = S-adenosyl 3-(methylsulfanyl)propylamine + CO2</text>
        <dbReference type="Rhea" id="RHEA:15981"/>
        <dbReference type="ChEBI" id="CHEBI:15378"/>
        <dbReference type="ChEBI" id="CHEBI:16526"/>
        <dbReference type="ChEBI" id="CHEBI:57443"/>
        <dbReference type="ChEBI" id="CHEBI:59789"/>
        <dbReference type="EC" id="4.1.1.50"/>
    </reaction>
</comment>
<comment type="cofactor">
    <cofactor evidence="1">
        <name>pyruvate</name>
        <dbReference type="ChEBI" id="CHEBI:15361"/>
    </cofactor>
    <text evidence="1">Binds 1 pyruvoyl group covalently per subunit.</text>
</comment>
<comment type="pathway">
    <text evidence="1">Amine and polyamine biosynthesis; S-adenosylmethioninamine biosynthesis; S-adenosylmethioninamine from S-adenosyl-L-methionine: step 1/1.</text>
</comment>
<comment type="subunit">
    <text evidence="1">Heterooctamer of four alpha and four beta chains arranged as a tetramer of alpha/beta heterodimers.</text>
</comment>
<comment type="PTM">
    <text evidence="1">Is synthesized initially as an inactive proenzyme. Formation of the active enzyme involves a self-maturation process in which the active site pyruvoyl group is generated from an internal serine residue via an autocatalytic post-translational modification. Two non-identical subunits are generated from the proenzyme in this reaction, and the pyruvate is formed at the N-terminus of the alpha chain, which is derived from the carboxyl end of the proenzyme. The post-translation cleavage follows an unusual pathway, termed non-hydrolytic serinolysis, in which the side chain hydroxyl group of the serine supplies its oxygen atom to form the C-terminus of the beta chain, while the remainder of the serine residue undergoes an oxidative deamination to produce ammonia and the pyruvoyl group blocking the N-terminus of the alpha chain.</text>
</comment>
<comment type="similarity">
    <text evidence="1">Belongs to the prokaryotic AdoMetDC family. Type 2 subfamily.</text>
</comment>